<reference key="1">
    <citation type="journal article" date="2008" name="PLoS ONE">
        <title>Genome biology of Actinobacillus pleuropneumoniae JL03, an isolate of serotype 3 prevalent in China.</title>
        <authorList>
            <person name="Xu Z."/>
            <person name="Zhou Y."/>
            <person name="Li L."/>
            <person name="Zhou R."/>
            <person name="Xiao S."/>
            <person name="Wan Y."/>
            <person name="Zhang S."/>
            <person name="Wang K."/>
            <person name="Li W."/>
            <person name="Li L."/>
            <person name="Jin H."/>
            <person name="Kang M."/>
            <person name="Dalai B."/>
            <person name="Li T."/>
            <person name="Liu L."/>
            <person name="Cheng Y."/>
            <person name="Zhang L."/>
            <person name="Xu T."/>
            <person name="Zheng H."/>
            <person name="Pu S."/>
            <person name="Wang B."/>
            <person name="Gu W."/>
            <person name="Zhang X.L."/>
            <person name="Zhu G.-F."/>
            <person name="Wang S."/>
            <person name="Zhao G.-P."/>
            <person name="Chen H."/>
        </authorList>
    </citation>
    <scope>NUCLEOTIDE SEQUENCE [LARGE SCALE GENOMIC DNA]</scope>
    <source>
        <strain>JL03</strain>
    </source>
</reference>
<organism>
    <name type="scientific">Actinobacillus pleuropneumoniae serotype 3 (strain JL03)</name>
    <dbReference type="NCBI Taxonomy" id="434271"/>
    <lineage>
        <taxon>Bacteria</taxon>
        <taxon>Pseudomonadati</taxon>
        <taxon>Pseudomonadota</taxon>
        <taxon>Gammaproteobacteria</taxon>
        <taxon>Pasteurellales</taxon>
        <taxon>Pasteurellaceae</taxon>
        <taxon>Actinobacillus</taxon>
    </lineage>
</organism>
<gene>
    <name evidence="1" type="primary">secB</name>
    <name type="ordered locus">APJL_1535</name>
</gene>
<name>SECB_ACTPJ</name>
<sequence length="166" mass="18738">MTEENQVTAQEEAQTPFELQIQRIYIKDVSFEAPNLPTIFHQEWKPQLGFELDTETKQLDEDLYEVVLHINVSTTLEDSGDTAFICEVKQAGVFTIKGIEGIQLAHCLASQCPNVLYPYARELISSLVNRGTFPALNLSPVNFDALFMDYLQRQEAEQNAEAPAVN</sequence>
<protein>
    <recommendedName>
        <fullName evidence="1">Protein-export protein SecB</fullName>
    </recommendedName>
</protein>
<evidence type="ECO:0000255" key="1">
    <source>
        <dbReference type="HAMAP-Rule" id="MF_00821"/>
    </source>
</evidence>
<dbReference type="EMBL" id="CP000687">
    <property type="protein sequence ID" value="ABY70087.1"/>
    <property type="molecule type" value="Genomic_DNA"/>
</dbReference>
<dbReference type="RefSeq" id="WP_005605421.1">
    <property type="nucleotide sequence ID" value="NC_010278.1"/>
</dbReference>
<dbReference type="SMR" id="B0BRA2"/>
<dbReference type="KEGG" id="apj:APJL_1535"/>
<dbReference type="HOGENOM" id="CLU_111574_1_0_6"/>
<dbReference type="Proteomes" id="UP000008547">
    <property type="component" value="Chromosome"/>
</dbReference>
<dbReference type="GO" id="GO:0005737">
    <property type="term" value="C:cytoplasm"/>
    <property type="evidence" value="ECO:0007669"/>
    <property type="project" value="UniProtKB-SubCell"/>
</dbReference>
<dbReference type="GO" id="GO:0051082">
    <property type="term" value="F:unfolded protein binding"/>
    <property type="evidence" value="ECO:0007669"/>
    <property type="project" value="InterPro"/>
</dbReference>
<dbReference type="GO" id="GO:0006457">
    <property type="term" value="P:protein folding"/>
    <property type="evidence" value="ECO:0007669"/>
    <property type="project" value="UniProtKB-UniRule"/>
</dbReference>
<dbReference type="GO" id="GO:0051262">
    <property type="term" value="P:protein tetramerization"/>
    <property type="evidence" value="ECO:0007669"/>
    <property type="project" value="InterPro"/>
</dbReference>
<dbReference type="GO" id="GO:0015031">
    <property type="term" value="P:protein transport"/>
    <property type="evidence" value="ECO:0007669"/>
    <property type="project" value="UniProtKB-UniRule"/>
</dbReference>
<dbReference type="CDD" id="cd00557">
    <property type="entry name" value="Translocase_SecB"/>
    <property type="match status" value="1"/>
</dbReference>
<dbReference type="Gene3D" id="3.10.420.10">
    <property type="entry name" value="SecB-like"/>
    <property type="match status" value="1"/>
</dbReference>
<dbReference type="HAMAP" id="MF_00821">
    <property type="entry name" value="SecB"/>
    <property type="match status" value="1"/>
</dbReference>
<dbReference type="InterPro" id="IPR003708">
    <property type="entry name" value="SecB"/>
</dbReference>
<dbReference type="InterPro" id="IPR035958">
    <property type="entry name" value="SecB-like_sf"/>
</dbReference>
<dbReference type="NCBIfam" id="NF004393">
    <property type="entry name" value="PRK05751.1-4"/>
    <property type="match status" value="1"/>
</dbReference>
<dbReference type="NCBIfam" id="TIGR00809">
    <property type="entry name" value="secB"/>
    <property type="match status" value="1"/>
</dbReference>
<dbReference type="PANTHER" id="PTHR36918">
    <property type="match status" value="1"/>
</dbReference>
<dbReference type="PANTHER" id="PTHR36918:SF1">
    <property type="entry name" value="PROTEIN-EXPORT PROTEIN SECB"/>
    <property type="match status" value="1"/>
</dbReference>
<dbReference type="Pfam" id="PF02556">
    <property type="entry name" value="SecB"/>
    <property type="match status" value="1"/>
</dbReference>
<dbReference type="PRINTS" id="PR01594">
    <property type="entry name" value="SECBCHAPRONE"/>
</dbReference>
<dbReference type="SUPFAM" id="SSF54611">
    <property type="entry name" value="SecB-like"/>
    <property type="match status" value="1"/>
</dbReference>
<feature type="chain" id="PRO_1000134359" description="Protein-export protein SecB">
    <location>
        <begin position="1"/>
        <end position="166"/>
    </location>
</feature>
<keyword id="KW-0143">Chaperone</keyword>
<keyword id="KW-0963">Cytoplasm</keyword>
<keyword id="KW-0653">Protein transport</keyword>
<keyword id="KW-0811">Translocation</keyword>
<keyword id="KW-0813">Transport</keyword>
<proteinExistence type="inferred from homology"/>
<accession>B0BRA2</accession>
<comment type="function">
    <text evidence="1">One of the proteins required for the normal export of preproteins out of the cell cytoplasm. It is a molecular chaperone that binds to a subset of precursor proteins, maintaining them in a translocation-competent state. It also specifically binds to its receptor SecA.</text>
</comment>
<comment type="subunit">
    <text evidence="1">Homotetramer, a dimer of dimers. One homotetramer interacts with 1 SecA dimer.</text>
</comment>
<comment type="subcellular location">
    <subcellularLocation>
        <location evidence="1">Cytoplasm</location>
    </subcellularLocation>
</comment>
<comment type="similarity">
    <text evidence="1">Belongs to the SecB family.</text>
</comment>